<organism>
    <name type="scientific">Pseudomonas syringae pv. tomato (strain ATCC BAA-871 / DC3000)</name>
    <dbReference type="NCBI Taxonomy" id="223283"/>
    <lineage>
        <taxon>Bacteria</taxon>
        <taxon>Pseudomonadati</taxon>
        <taxon>Pseudomonadota</taxon>
        <taxon>Gammaproteobacteria</taxon>
        <taxon>Pseudomonadales</taxon>
        <taxon>Pseudomonadaceae</taxon>
        <taxon>Pseudomonas</taxon>
    </lineage>
</organism>
<evidence type="ECO:0000255" key="1">
    <source>
        <dbReference type="HAMAP-Rule" id="MF_00456"/>
    </source>
</evidence>
<gene>
    <name evidence="1" type="primary">proB</name>
    <name type="ordered locus">PSPTO_0800</name>
</gene>
<reference key="1">
    <citation type="journal article" date="2003" name="Proc. Natl. Acad. Sci. U.S.A.">
        <title>The complete genome sequence of the Arabidopsis and tomato pathogen Pseudomonas syringae pv. tomato DC3000.</title>
        <authorList>
            <person name="Buell C.R."/>
            <person name="Joardar V."/>
            <person name="Lindeberg M."/>
            <person name="Selengut J."/>
            <person name="Paulsen I.T."/>
            <person name="Gwinn M.L."/>
            <person name="Dodson R.J."/>
            <person name="DeBoy R.T."/>
            <person name="Durkin A.S."/>
            <person name="Kolonay J.F."/>
            <person name="Madupu R."/>
            <person name="Daugherty S.C."/>
            <person name="Brinkac L.M."/>
            <person name="Beanan M.J."/>
            <person name="Haft D.H."/>
            <person name="Nelson W.C."/>
            <person name="Davidsen T.M."/>
            <person name="Zafar N."/>
            <person name="Zhou L."/>
            <person name="Liu J."/>
            <person name="Yuan Q."/>
            <person name="Khouri H.M."/>
            <person name="Fedorova N.B."/>
            <person name="Tran B."/>
            <person name="Russell D."/>
            <person name="Berry K.J."/>
            <person name="Utterback T.R."/>
            <person name="Van Aken S.E."/>
            <person name="Feldblyum T.V."/>
            <person name="D'Ascenzo M."/>
            <person name="Deng W.-L."/>
            <person name="Ramos A.R."/>
            <person name="Alfano J.R."/>
            <person name="Cartinhour S."/>
            <person name="Chatterjee A.K."/>
            <person name="Delaney T.P."/>
            <person name="Lazarowitz S.G."/>
            <person name="Martin G.B."/>
            <person name="Schneider D.J."/>
            <person name="Tang X."/>
            <person name="Bender C.L."/>
            <person name="White O."/>
            <person name="Fraser C.M."/>
            <person name="Collmer A."/>
        </authorList>
    </citation>
    <scope>NUCLEOTIDE SEQUENCE [LARGE SCALE GENOMIC DNA]</scope>
    <source>
        <strain>ATCC BAA-871 / DC3000</strain>
    </source>
</reference>
<sequence length="372" mass="39770">MRSKVTGAQRWVVKIGSALLTADGKGLDRNAMGVWVEQMVALHEAGVELVLVSSGAVAAGMSRLGWTARPSAMHELQAAAAIGQMGLVQAWESSFAEHGRHTAQILLTHDDLSDRKRYLNARSTLRTLVELGVVPVINENDTVVTDEIRFGDNDTLAALVANLVEADLLVILTDRDGMFDADPRNNPDAQLIYEARADDPALDAVAGGTGGALGRGGMQTKLRAARLAARSGAHTVIVGGRIERVLARLKGGERLGTLLSPEREMLAARKQWLAGHLQTRGTLVLDDGAVSALASDHKSLLPVGVKLVQGSFRRGEMVVCVAPDGREIARGLSNYSAIEAQKIIGHSSEAIVRELGYMAEPELIHRDNLILV</sequence>
<dbReference type="EC" id="2.7.2.11" evidence="1"/>
<dbReference type="EMBL" id="AE016853">
    <property type="protein sequence ID" value="AAO54342.1"/>
    <property type="molecule type" value="Genomic_DNA"/>
</dbReference>
<dbReference type="RefSeq" id="NP_790647.1">
    <property type="nucleotide sequence ID" value="NC_004578.1"/>
</dbReference>
<dbReference type="RefSeq" id="WP_003381304.1">
    <property type="nucleotide sequence ID" value="NC_004578.1"/>
</dbReference>
<dbReference type="SMR" id="Q889F0"/>
<dbReference type="STRING" id="223283.PSPTO_0800"/>
<dbReference type="GeneID" id="1182425"/>
<dbReference type="KEGG" id="pst:PSPTO_0800"/>
<dbReference type="PATRIC" id="fig|223283.9.peg.814"/>
<dbReference type="eggNOG" id="COG0263">
    <property type="taxonomic scope" value="Bacteria"/>
</dbReference>
<dbReference type="HOGENOM" id="CLU_025400_2_0_6"/>
<dbReference type="OrthoDB" id="9804434at2"/>
<dbReference type="PhylomeDB" id="Q889F0"/>
<dbReference type="UniPathway" id="UPA00098">
    <property type="reaction ID" value="UER00359"/>
</dbReference>
<dbReference type="Proteomes" id="UP000002515">
    <property type="component" value="Chromosome"/>
</dbReference>
<dbReference type="GO" id="GO:0005829">
    <property type="term" value="C:cytosol"/>
    <property type="evidence" value="ECO:0007669"/>
    <property type="project" value="TreeGrafter"/>
</dbReference>
<dbReference type="GO" id="GO:0005524">
    <property type="term" value="F:ATP binding"/>
    <property type="evidence" value="ECO:0007669"/>
    <property type="project" value="UniProtKB-KW"/>
</dbReference>
<dbReference type="GO" id="GO:0004349">
    <property type="term" value="F:glutamate 5-kinase activity"/>
    <property type="evidence" value="ECO:0007669"/>
    <property type="project" value="UniProtKB-UniRule"/>
</dbReference>
<dbReference type="GO" id="GO:0003723">
    <property type="term" value="F:RNA binding"/>
    <property type="evidence" value="ECO:0007669"/>
    <property type="project" value="InterPro"/>
</dbReference>
<dbReference type="GO" id="GO:0055129">
    <property type="term" value="P:L-proline biosynthetic process"/>
    <property type="evidence" value="ECO:0007669"/>
    <property type="project" value="UniProtKB-UniRule"/>
</dbReference>
<dbReference type="CDD" id="cd04242">
    <property type="entry name" value="AAK_G5K_ProB"/>
    <property type="match status" value="1"/>
</dbReference>
<dbReference type="CDD" id="cd21157">
    <property type="entry name" value="PUA_G5K"/>
    <property type="match status" value="1"/>
</dbReference>
<dbReference type="FunFam" id="2.30.130.10:FF:000007">
    <property type="entry name" value="Glutamate 5-kinase"/>
    <property type="match status" value="1"/>
</dbReference>
<dbReference type="FunFam" id="3.40.1160.10:FF:000018">
    <property type="entry name" value="Glutamate 5-kinase"/>
    <property type="match status" value="1"/>
</dbReference>
<dbReference type="Gene3D" id="3.40.1160.10">
    <property type="entry name" value="Acetylglutamate kinase-like"/>
    <property type="match status" value="2"/>
</dbReference>
<dbReference type="Gene3D" id="2.30.130.10">
    <property type="entry name" value="PUA domain"/>
    <property type="match status" value="1"/>
</dbReference>
<dbReference type="HAMAP" id="MF_00456">
    <property type="entry name" value="ProB"/>
    <property type="match status" value="1"/>
</dbReference>
<dbReference type="InterPro" id="IPR036393">
    <property type="entry name" value="AceGlu_kinase-like_sf"/>
</dbReference>
<dbReference type="InterPro" id="IPR001048">
    <property type="entry name" value="Asp/Glu/Uridylate_kinase"/>
</dbReference>
<dbReference type="InterPro" id="IPR041739">
    <property type="entry name" value="G5K_ProB"/>
</dbReference>
<dbReference type="InterPro" id="IPR001057">
    <property type="entry name" value="Glu/AcGlu_kinase"/>
</dbReference>
<dbReference type="InterPro" id="IPR011529">
    <property type="entry name" value="Glu_5kinase"/>
</dbReference>
<dbReference type="InterPro" id="IPR005715">
    <property type="entry name" value="Glu_5kinase/COase_Synthase"/>
</dbReference>
<dbReference type="InterPro" id="IPR019797">
    <property type="entry name" value="Glutamate_5-kinase_CS"/>
</dbReference>
<dbReference type="InterPro" id="IPR002478">
    <property type="entry name" value="PUA"/>
</dbReference>
<dbReference type="InterPro" id="IPR015947">
    <property type="entry name" value="PUA-like_sf"/>
</dbReference>
<dbReference type="InterPro" id="IPR036974">
    <property type="entry name" value="PUA_sf"/>
</dbReference>
<dbReference type="NCBIfam" id="TIGR01027">
    <property type="entry name" value="proB"/>
    <property type="match status" value="1"/>
</dbReference>
<dbReference type="PANTHER" id="PTHR43654">
    <property type="entry name" value="GLUTAMATE 5-KINASE"/>
    <property type="match status" value="1"/>
</dbReference>
<dbReference type="PANTHER" id="PTHR43654:SF1">
    <property type="entry name" value="ISOPENTENYL PHOSPHATE KINASE"/>
    <property type="match status" value="1"/>
</dbReference>
<dbReference type="Pfam" id="PF00696">
    <property type="entry name" value="AA_kinase"/>
    <property type="match status" value="1"/>
</dbReference>
<dbReference type="Pfam" id="PF01472">
    <property type="entry name" value="PUA"/>
    <property type="match status" value="1"/>
</dbReference>
<dbReference type="PIRSF" id="PIRSF000729">
    <property type="entry name" value="GK"/>
    <property type="match status" value="1"/>
</dbReference>
<dbReference type="PRINTS" id="PR00474">
    <property type="entry name" value="GLU5KINASE"/>
</dbReference>
<dbReference type="SMART" id="SM00359">
    <property type="entry name" value="PUA"/>
    <property type="match status" value="1"/>
</dbReference>
<dbReference type="SUPFAM" id="SSF53633">
    <property type="entry name" value="Carbamate kinase-like"/>
    <property type="match status" value="1"/>
</dbReference>
<dbReference type="SUPFAM" id="SSF88697">
    <property type="entry name" value="PUA domain-like"/>
    <property type="match status" value="1"/>
</dbReference>
<dbReference type="PROSITE" id="PS00902">
    <property type="entry name" value="GLUTAMATE_5_KINASE"/>
    <property type="match status" value="1"/>
</dbReference>
<dbReference type="PROSITE" id="PS50890">
    <property type="entry name" value="PUA"/>
    <property type="match status" value="1"/>
</dbReference>
<accession>Q889F0</accession>
<proteinExistence type="inferred from homology"/>
<feature type="chain" id="PRO_0000109711" description="Glutamate 5-kinase">
    <location>
        <begin position="1"/>
        <end position="372"/>
    </location>
</feature>
<feature type="domain" description="PUA" evidence="1">
    <location>
        <begin position="280"/>
        <end position="358"/>
    </location>
</feature>
<feature type="binding site" evidence="1">
    <location>
        <position position="14"/>
    </location>
    <ligand>
        <name>ATP</name>
        <dbReference type="ChEBI" id="CHEBI:30616"/>
    </ligand>
</feature>
<feature type="binding site" evidence="1">
    <location>
        <position position="54"/>
    </location>
    <ligand>
        <name>substrate</name>
    </ligand>
</feature>
<feature type="binding site" evidence="1">
    <location>
        <position position="141"/>
    </location>
    <ligand>
        <name>substrate</name>
    </ligand>
</feature>
<feature type="binding site" evidence="1">
    <location>
        <position position="153"/>
    </location>
    <ligand>
        <name>substrate</name>
    </ligand>
</feature>
<feature type="binding site" evidence="1">
    <location>
        <begin position="173"/>
        <end position="174"/>
    </location>
    <ligand>
        <name>ATP</name>
        <dbReference type="ChEBI" id="CHEBI:30616"/>
    </ligand>
</feature>
<keyword id="KW-0028">Amino-acid biosynthesis</keyword>
<keyword id="KW-0067">ATP-binding</keyword>
<keyword id="KW-0963">Cytoplasm</keyword>
<keyword id="KW-0418">Kinase</keyword>
<keyword id="KW-0547">Nucleotide-binding</keyword>
<keyword id="KW-0641">Proline biosynthesis</keyword>
<keyword id="KW-1185">Reference proteome</keyword>
<keyword id="KW-0808">Transferase</keyword>
<protein>
    <recommendedName>
        <fullName evidence="1">Glutamate 5-kinase</fullName>
        <ecNumber evidence="1">2.7.2.11</ecNumber>
    </recommendedName>
    <alternativeName>
        <fullName evidence="1">Gamma-glutamyl kinase</fullName>
        <shortName evidence="1">GK</shortName>
    </alternativeName>
</protein>
<comment type="function">
    <text evidence="1">Catalyzes the transfer of a phosphate group to glutamate to form L-glutamate 5-phosphate.</text>
</comment>
<comment type="catalytic activity">
    <reaction evidence="1">
        <text>L-glutamate + ATP = L-glutamyl 5-phosphate + ADP</text>
        <dbReference type="Rhea" id="RHEA:14877"/>
        <dbReference type="ChEBI" id="CHEBI:29985"/>
        <dbReference type="ChEBI" id="CHEBI:30616"/>
        <dbReference type="ChEBI" id="CHEBI:58274"/>
        <dbReference type="ChEBI" id="CHEBI:456216"/>
        <dbReference type="EC" id="2.7.2.11"/>
    </reaction>
</comment>
<comment type="pathway">
    <text evidence="1">Amino-acid biosynthesis; L-proline biosynthesis; L-glutamate 5-semialdehyde from L-glutamate: step 1/2.</text>
</comment>
<comment type="subcellular location">
    <subcellularLocation>
        <location evidence="1">Cytoplasm</location>
    </subcellularLocation>
</comment>
<comment type="similarity">
    <text evidence="1">Belongs to the glutamate 5-kinase family.</text>
</comment>
<name>PROB_PSESM</name>